<accession>P17792</accession>
<reference key="1">
    <citation type="journal article" date="1990" name="Mol. Gen. Genet.">
        <title>The virB operon of Agrobacterium tumefaciens pTiC58 encodes 11 open reading frames.</title>
        <authorList>
            <person name="Kuldau G.A."/>
            <person name="de Vos G."/>
            <person name="Owen J."/>
            <person name="McCaffrey G."/>
            <person name="Zambryski P."/>
        </authorList>
    </citation>
    <scope>NUCLEOTIDE SEQUENCE [GENOMIC DNA]</scope>
</reference>
<reference key="2">
    <citation type="journal article" date="1990" name="Plasmid">
        <title>Molecular characterization of the vir regulon of Agrobacterium tumefaciens: complete nucleotide sequence and gene organization of the 28.63-kbp regulon cloned as a single unit.</title>
        <authorList>
            <person name="Rogowsky P.M."/>
            <person name="Powell B.S."/>
            <person name="Shirasu K."/>
            <person name="Lin T.-S."/>
            <person name="Morel P."/>
            <person name="Zyprian E.M."/>
            <person name="Steck T.R."/>
            <person name="Kado C.I."/>
        </authorList>
    </citation>
    <scope>NUCLEOTIDE SEQUENCE [GENOMIC DNA]</scope>
</reference>
<reference key="3">
    <citation type="journal article" date="1990" name="Mol. Microbiol.">
        <title>Characterization of the virB operon of an Agrobacterium tumefaciens Ti plasmid: nucleotide sequence and protein analysis.</title>
        <authorList>
            <person name="Shirasu K."/>
            <person name="Morel P."/>
            <person name="Kado C.I."/>
        </authorList>
    </citation>
    <scope>NUCLEOTIDE SEQUENCE [GENOMIC DNA]</scope>
</reference>
<reference key="4">
    <citation type="journal article" date="2001" name="Science">
        <title>The genome of the natural genetic engineer Agrobacterium tumefaciens C58.</title>
        <authorList>
            <person name="Wood D.W."/>
            <person name="Setubal J.C."/>
            <person name="Kaul R."/>
            <person name="Monks D.E."/>
            <person name="Kitajima J.P."/>
            <person name="Okura V.K."/>
            <person name="Zhou Y."/>
            <person name="Chen L."/>
            <person name="Wood G.E."/>
            <person name="Almeida N.F. Jr."/>
            <person name="Woo L."/>
            <person name="Chen Y."/>
            <person name="Paulsen I.T."/>
            <person name="Eisen J.A."/>
            <person name="Karp P.D."/>
            <person name="Bovee D. Sr."/>
            <person name="Chapman P."/>
            <person name="Clendenning J."/>
            <person name="Deatherage G."/>
            <person name="Gillet W."/>
            <person name="Grant C."/>
            <person name="Kutyavin T."/>
            <person name="Levy R."/>
            <person name="Li M.-J."/>
            <person name="McClelland E."/>
            <person name="Palmieri A."/>
            <person name="Raymond C."/>
            <person name="Rouse G."/>
            <person name="Saenphimmachak C."/>
            <person name="Wu Z."/>
            <person name="Romero P."/>
            <person name="Gordon D."/>
            <person name="Zhang S."/>
            <person name="Yoo H."/>
            <person name="Tao Y."/>
            <person name="Biddle P."/>
            <person name="Jung M."/>
            <person name="Krespan W."/>
            <person name="Perry M."/>
            <person name="Gordon-Kamm B."/>
            <person name="Liao L."/>
            <person name="Kim S."/>
            <person name="Hendrick C."/>
            <person name="Zhao Z.-Y."/>
            <person name="Dolan M."/>
            <person name="Chumley F."/>
            <person name="Tingey S.V."/>
            <person name="Tomb J.-F."/>
            <person name="Gordon M.P."/>
            <person name="Olson M.V."/>
            <person name="Nester E.W."/>
        </authorList>
    </citation>
    <scope>NUCLEOTIDE SEQUENCE [LARGE SCALE GENOMIC DNA]</scope>
</reference>
<reference key="5">
    <citation type="journal article" date="2001" name="Science">
        <title>Genome sequence of the plant pathogen and biotechnology agent Agrobacterium tumefaciens C58.</title>
        <authorList>
            <person name="Goodner B."/>
            <person name="Hinkle G."/>
            <person name="Gattung S."/>
            <person name="Miller N."/>
            <person name="Blanchard M."/>
            <person name="Qurollo B."/>
            <person name="Goldman B.S."/>
            <person name="Cao Y."/>
            <person name="Askenazi M."/>
            <person name="Halling C."/>
            <person name="Mullin L."/>
            <person name="Houmiel K."/>
            <person name="Gordon J."/>
            <person name="Vaudin M."/>
            <person name="Iartchouk O."/>
            <person name="Epp A."/>
            <person name="Liu F."/>
            <person name="Wollam C."/>
            <person name="Allinger M."/>
            <person name="Doughty D."/>
            <person name="Scott C."/>
            <person name="Lappas C."/>
            <person name="Markelz B."/>
            <person name="Flanagan C."/>
            <person name="Crowell C."/>
            <person name="Gurson J."/>
            <person name="Lomo C."/>
            <person name="Sear C."/>
            <person name="Strub G."/>
            <person name="Cielo C."/>
            <person name="Slater S."/>
        </authorList>
    </citation>
    <scope>NUCLEOTIDE SEQUENCE [LARGE SCALE GENOMIC DNA]</scope>
    <source>
        <strain>C58 / ATCC 33970</strain>
    </source>
</reference>
<protein>
    <recommendedName>
        <fullName>Protein virB2</fullName>
    </recommendedName>
</protein>
<organism>
    <name type="scientific">Agrobacterium fabrum (strain C58 / ATCC 33970)</name>
    <name type="common">Agrobacterium tumefaciens (strain C58)</name>
    <dbReference type="NCBI Taxonomy" id="176299"/>
    <lineage>
        <taxon>Bacteria</taxon>
        <taxon>Pseudomonadati</taxon>
        <taxon>Pseudomonadota</taxon>
        <taxon>Alphaproteobacteria</taxon>
        <taxon>Hyphomicrobiales</taxon>
        <taxon>Rhizobiaceae</taxon>
        <taxon>Rhizobium/Agrobacterium group</taxon>
        <taxon>Agrobacterium</taxon>
        <taxon>Agrobacterium tumefaciens complex</taxon>
    </lineage>
</organism>
<gene>
    <name type="primary">virB2</name>
    <name type="ordered locus">Atu6168</name>
    <name type="ORF">AGR_pTi_4</name>
</gene>
<geneLocation type="plasmid">
    <name>pTiC58</name>
</geneLocation>
<proteinExistence type="evidence at protein level"/>
<sequence length="121" mass="12318">MRCFERYRVHLNRLSLSNAVMRMVSGYAPSVVGAMGWSIFSSGPAAAQSAGGGTDPATMVNNICTFILGPFGQSLAVLGIVAIGISWMFGRASLGLVAGVVGGIVIMFGASFLGKTLTGGG</sequence>
<evidence type="ECO:0000250" key="1"/>
<evidence type="ECO:0000255" key="2"/>
<evidence type="ECO:0000305" key="3"/>
<evidence type="ECO:0007829" key="4">
    <source>
        <dbReference type="PDB" id="8EXH"/>
    </source>
</evidence>
<name>VIRB2_AGRFC</name>
<comment type="function">
    <text>VirB proteins are suggested to act at the bacterial surface and there play an important role in directing T-DNA transfer to plant cells.</text>
</comment>
<comment type="subunit">
    <text evidence="1">Interacts with host plant RTNLB1 protein.</text>
</comment>
<comment type="subcellular location">
    <subcellularLocation>
        <location evidence="3">Cell outer membrane</location>
        <topology evidence="3">Multi-pass membrane protein</topology>
    </subcellularLocation>
</comment>
<comment type="similarity">
    <text evidence="3">Belongs to the virB2 family.</text>
</comment>
<feature type="signal peptide" evidence="2">
    <location>
        <begin position="1"/>
        <end position="19"/>
    </location>
</feature>
<feature type="chain" id="PRO_0000022660" description="Protein virB2">
    <location>
        <begin position="20"/>
        <end position="121"/>
    </location>
</feature>
<feature type="transmembrane region" description="Helical" evidence="2">
    <location>
        <begin position="65"/>
        <end position="85"/>
    </location>
</feature>
<feature type="transmembrane region" description="Helical" evidence="2">
    <location>
        <begin position="94"/>
        <end position="114"/>
    </location>
</feature>
<feature type="helix" evidence="4">
    <location>
        <begin position="56"/>
        <end position="68"/>
    </location>
</feature>
<feature type="helix" evidence="4">
    <location>
        <begin position="70"/>
        <end position="88"/>
    </location>
</feature>
<feature type="helix" evidence="4">
    <location>
        <begin position="94"/>
        <end position="108"/>
    </location>
</feature>
<feature type="helix" evidence="4">
    <location>
        <begin position="110"/>
        <end position="117"/>
    </location>
</feature>
<keyword id="KW-0002">3D-structure</keyword>
<keyword id="KW-0998">Cell outer membrane</keyword>
<keyword id="KW-0192">Crown gall tumor</keyword>
<keyword id="KW-0472">Membrane</keyword>
<keyword id="KW-0614">Plasmid</keyword>
<keyword id="KW-1185">Reference proteome</keyword>
<keyword id="KW-0732">Signal</keyword>
<keyword id="KW-0812">Transmembrane</keyword>
<keyword id="KW-1133">Transmembrane helix</keyword>
<dbReference type="EMBL" id="X53264">
    <property type="protein sequence ID" value="CAA37355.1"/>
    <property type="molecule type" value="Genomic_DNA"/>
</dbReference>
<dbReference type="EMBL" id="J03320">
    <property type="protein sequence ID" value="AAA91592.1"/>
    <property type="molecule type" value="Genomic_DNA"/>
</dbReference>
<dbReference type="EMBL" id="AE007871">
    <property type="protein sequence ID" value="AAK90929.1"/>
    <property type="molecule type" value="Genomic_DNA"/>
</dbReference>
<dbReference type="PIR" id="AF3248">
    <property type="entry name" value="AF3248"/>
</dbReference>
<dbReference type="PIR" id="S12342">
    <property type="entry name" value="B2AG58"/>
</dbReference>
<dbReference type="RefSeq" id="NP_396488.1">
    <property type="nucleotide sequence ID" value="NC_003065.3"/>
</dbReference>
<dbReference type="RefSeq" id="WP_010891502.1">
    <property type="nucleotide sequence ID" value="NC_003065.3"/>
</dbReference>
<dbReference type="PDB" id="8CUE">
    <property type="method" value="EM"/>
    <property type="resolution" value="3.20 A"/>
    <property type="chains" value="1A/1B/1C/1D/1E/1F/1G/1H/1I/1J/1K/1L/1M/1N/2A/2B/2C/2D/2E/2F/2G/2H/2I/2J/2K/2L/2M/2N/3A/3B=1-121"/>
</dbReference>
<dbReference type="PDB" id="8EXH">
    <property type="method" value="EM"/>
    <property type="resolution" value="3.50 A"/>
    <property type="chains" value="A/B/C/D/E/F/G/H/I/J/K/L/M/N/O/P/Q/R/S/T/U/V/W/X/Y/Z/a/b/c/d=52-120"/>
</dbReference>
<dbReference type="PDB" id="8FAI">
    <property type="method" value="EM"/>
    <property type="resolution" value="3.00 A"/>
    <property type="chains" value="A/B/C/D/E/F/G/H/I/J/K/L/M/N/O=1-121"/>
</dbReference>
<dbReference type="PDBsum" id="8CUE"/>
<dbReference type="PDBsum" id="8EXH"/>
<dbReference type="PDBsum" id="8FAI"/>
<dbReference type="EMDB" id="EMD-26999"/>
<dbReference type="EMDB" id="EMD-28657"/>
<dbReference type="EMDB" id="EMD-28957"/>
<dbReference type="SMR" id="P17792"/>
<dbReference type="IntAct" id="P17792">
    <property type="interactions" value="1"/>
</dbReference>
<dbReference type="EnsemblBacteria" id="AAK90929">
    <property type="protein sequence ID" value="AAK90929"/>
    <property type="gene ID" value="Atu6168"/>
</dbReference>
<dbReference type="GeneID" id="86882423"/>
<dbReference type="KEGG" id="atu:Atu6168"/>
<dbReference type="PATRIC" id="fig|176299.10.peg.5364"/>
<dbReference type="HOGENOM" id="CLU_165260_0_0_5"/>
<dbReference type="OrthoDB" id="7280818at2"/>
<dbReference type="BioCyc" id="AGRO:ATU6168-MONOMER"/>
<dbReference type="Proteomes" id="UP000000813">
    <property type="component" value="Plasmid Ti"/>
</dbReference>
<dbReference type="GO" id="GO:0009279">
    <property type="term" value="C:cell outer membrane"/>
    <property type="evidence" value="ECO:0007669"/>
    <property type="project" value="UniProtKB-SubCell"/>
</dbReference>
<dbReference type="GO" id="GO:0043684">
    <property type="term" value="C:type IV secretion system complex"/>
    <property type="evidence" value="ECO:0000317"/>
    <property type="project" value="PAMGO_GAT"/>
</dbReference>
<dbReference type="GO" id="GO:0030255">
    <property type="term" value="P:protein secretion by the type IV secretion system"/>
    <property type="evidence" value="ECO:0000317"/>
    <property type="project" value="PAMGO_GAT"/>
</dbReference>
<dbReference type="InterPro" id="IPR007039">
    <property type="entry name" value="TrbC/VirB2"/>
</dbReference>
<dbReference type="NCBIfam" id="NF010431">
    <property type="entry name" value="PRK13857.1"/>
    <property type="match status" value="1"/>
</dbReference>
<dbReference type="Pfam" id="PF04956">
    <property type="entry name" value="TrbC"/>
    <property type="match status" value="1"/>
</dbReference>